<evidence type="ECO:0000255" key="1">
    <source>
        <dbReference type="HAMAP-Rule" id="MF_00148"/>
    </source>
</evidence>
<accession>A6TZ58</accession>
<dbReference type="EC" id="3.2.2.27" evidence="1"/>
<dbReference type="EMBL" id="CP000736">
    <property type="protein sequence ID" value="ABR51476.1"/>
    <property type="molecule type" value="Genomic_DNA"/>
</dbReference>
<dbReference type="SMR" id="A6TZ58"/>
<dbReference type="KEGG" id="sah:SaurJH1_0618"/>
<dbReference type="HOGENOM" id="CLU_032162_3_1_9"/>
<dbReference type="GO" id="GO:0005737">
    <property type="term" value="C:cytoplasm"/>
    <property type="evidence" value="ECO:0007669"/>
    <property type="project" value="UniProtKB-SubCell"/>
</dbReference>
<dbReference type="GO" id="GO:0004844">
    <property type="term" value="F:uracil DNA N-glycosylase activity"/>
    <property type="evidence" value="ECO:0007669"/>
    <property type="project" value="UniProtKB-UniRule"/>
</dbReference>
<dbReference type="GO" id="GO:0097510">
    <property type="term" value="P:base-excision repair, AP site formation via deaminated base removal"/>
    <property type="evidence" value="ECO:0007669"/>
    <property type="project" value="TreeGrafter"/>
</dbReference>
<dbReference type="CDD" id="cd10027">
    <property type="entry name" value="UDG-F1-like"/>
    <property type="match status" value="1"/>
</dbReference>
<dbReference type="FunFam" id="3.40.470.10:FF:000001">
    <property type="entry name" value="Uracil-DNA glycosylase"/>
    <property type="match status" value="1"/>
</dbReference>
<dbReference type="Gene3D" id="3.40.470.10">
    <property type="entry name" value="Uracil-DNA glycosylase-like domain"/>
    <property type="match status" value="1"/>
</dbReference>
<dbReference type="HAMAP" id="MF_00148">
    <property type="entry name" value="UDG"/>
    <property type="match status" value="1"/>
</dbReference>
<dbReference type="InterPro" id="IPR002043">
    <property type="entry name" value="UDG_fam1"/>
</dbReference>
<dbReference type="InterPro" id="IPR018085">
    <property type="entry name" value="Ura-DNA_Glyclase_AS"/>
</dbReference>
<dbReference type="InterPro" id="IPR005122">
    <property type="entry name" value="Uracil-DNA_glycosylase-like"/>
</dbReference>
<dbReference type="InterPro" id="IPR036895">
    <property type="entry name" value="Uracil-DNA_glycosylase-like_sf"/>
</dbReference>
<dbReference type="NCBIfam" id="NF003588">
    <property type="entry name" value="PRK05254.1-1"/>
    <property type="match status" value="1"/>
</dbReference>
<dbReference type="NCBIfam" id="NF003589">
    <property type="entry name" value="PRK05254.1-2"/>
    <property type="match status" value="1"/>
</dbReference>
<dbReference type="NCBIfam" id="NF003591">
    <property type="entry name" value="PRK05254.1-4"/>
    <property type="match status" value="1"/>
</dbReference>
<dbReference type="NCBIfam" id="NF003592">
    <property type="entry name" value="PRK05254.1-5"/>
    <property type="match status" value="1"/>
</dbReference>
<dbReference type="NCBIfam" id="TIGR00628">
    <property type="entry name" value="ung"/>
    <property type="match status" value="1"/>
</dbReference>
<dbReference type="PANTHER" id="PTHR11264">
    <property type="entry name" value="URACIL-DNA GLYCOSYLASE"/>
    <property type="match status" value="1"/>
</dbReference>
<dbReference type="PANTHER" id="PTHR11264:SF0">
    <property type="entry name" value="URACIL-DNA GLYCOSYLASE"/>
    <property type="match status" value="1"/>
</dbReference>
<dbReference type="Pfam" id="PF03167">
    <property type="entry name" value="UDG"/>
    <property type="match status" value="1"/>
</dbReference>
<dbReference type="SMART" id="SM00986">
    <property type="entry name" value="UDG"/>
    <property type="match status" value="1"/>
</dbReference>
<dbReference type="SMART" id="SM00987">
    <property type="entry name" value="UreE_C"/>
    <property type="match status" value="1"/>
</dbReference>
<dbReference type="SUPFAM" id="SSF52141">
    <property type="entry name" value="Uracil-DNA glycosylase-like"/>
    <property type="match status" value="1"/>
</dbReference>
<dbReference type="PROSITE" id="PS00130">
    <property type="entry name" value="U_DNA_GLYCOSYLASE"/>
    <property type="match status" value="1"/>
</dbReference>
<proteinExistence type="inferred from homology"/>
<gene>
    <name evidence="1" type="primary">ung</name>
    <name type="ordered locus">SaurJH1_0618</name>
</gene>
<sequence length="218" mass="24937">MEWSQIFHDITTKHDFKAMHDFLEKEYSTAIVYPDRENIYQAFDLTPFENIKVVILGQDPYHGPNQAHGLAFSVQPNAKFPPSLRNMYKELADDIGCVRQTPHLQDWAREGVLLLNTVLTVRQGEANSHRDIGWETFTDEIIKAVSDYKEHVVFILWGKPAQQKIKLIDTSKHCIIKSVHPSPLSAYRGFFGSKPYSKANAYLESVGKSPINWCESEA</sequence>
<protein>
    <recommendedName>
        <fullName evidence="1">Uracil-DNA glycosylase</fullName>
        <shortName evidence="1">UDG</shortName>
        <ecNumber evidence="1">3.2.2.27</ecNumber>
    </recommendedName>
</protein>
<comment type="function">
    <text evidence="1">Excises uracil residues from the DNA which can arise as a result of misincorporation of dUMP residues by DNA polymerase or due to deamination of cytosine.</text>
</comment>
<comment type="catalytic activity">
    <reaction evidence="1">
        <text>Hydrolyzes single-stranded DNA or mismatched double-stranded DNA and polynucleotides, releasing free uracil.</text>
        <dbReference type="EC" id="3.2.2.27"/>
    </reaction>
</comment>
<comment type="subcellular location">
    <subcellularLocation>
        <location evidence="1">Cytoplasm</location>
    </subcellularLocation>
</comment>
<comment type="similarity">
    <text evidence="1">Belongs to the uracil-DNA glycosylase (UDG) superfamily. UNG family.</text>
</comment>
<keyword id="KW-0963">Cytoplasm</keyword>
<keyword id="KW-0227">DNA damage</keyword>
<keyword id="KW-0234">DNA repair</keyword>
<keyword id="KW-0378">Hydrolase</keyword>
<feature type="chain" id="PRO_1000076680" description="Uracil-DNA glycosylase">
    <location>
        <begin position="1"/>
        <end position="218"/>
    </location>
</feature>
<feature type="active site" description="Proton acceptor" evidence="1">
    <location>
        <position position="59"/>
    </location>
</feature>
<reference key="1">
    <citation type="submission" date="2007-06" db="EMBL/GenBank/DDBJ databases">
        <title>Complete sequence of chromosome of Staphylococcus aureus subsp. aureus JH1.</title>
        <authorList>
            <consortium name="US DOE Joint Genome Institute"/>
            <person name="Copeland A."/>
            <person name="Lucas S."/>
            <person name="Lapidus A."/>
            <person name="Barry K."/>
            <person name="Detter J.C."/>
            <person name="Glavina del Rio T."/>
            <person name="Hammon N."/>
            <person name="Israni S."/>
            <person name="Dalin E."/>
            <person name="Tice H."/>
            <person name="Pitluck S."/>
            <person name="Chain P."/>
            <person name="Malfatti S."/>
            <person name="Shin M."/>
            <person name="Vergez L."/>
            <person name="Schmutz J."/>
            <person name="Larimer F."/>
            <person name="Land M."/>
            <person name="Hauser L."/>
            <person name="Kyrpides N."/>
            <person name="Ivanova N."/>
            <person name="Tomasz A."/>
            <person name="Richardson P."/>
        </authorList>
    </citation>
    <scope>NUCLEOTIDE SEQUENCE [LARGE SCALE GENOMIC DNA]</scope>
    <source>
        <strain>JH1</strain>
    </source>
</reference>
<name>UNG_STAA2</name>
<organism>
    <name type="scientific">Staphylococcus aureus (strain JH1)</name>
    <dbReference type="NCBI Taxonomy" id="359787"/>
    <lineage>
        <taxon>Bacteria</taxon>
        <taxon>Bacillati</taxon>
        <taxon>Bacillota</taxon>
        <taxon>Bacilli</taxon>
        <taxon>Bacillales</taxon>
        <taxon>Staphylococcaceae</taxon>
        <taxon>Staphylococcus</taxon>
    </lineage>
</organism>